<feature type="chain" id="PRO_0000151330" description="Ketol-acid reductoisomerase (NADP(+))">
    <location>
        <begin position="1"/>
        <end position="333"/>
    </location>
</feature>
<feature type="domain" description="KARI N-terminal Rossmann" evidence="2">
    <location>
        <begin position="1"/>
        <end position="179"/>
    </location>
</feature>
<feature type="domain" description="KARI C-terminal knotted" evidence="3">
    <location>
        <begin position="180"/>
        <end position="325"/>
    </location>
</feature>
<feature type="active site" evidence="1">
    <location>
        <position position="105"/>
    </location>
</feature>
<feature type="binding site" evidence="1">
    <location>
        <begin position="22"/>
        <end position="25"/>
    </location>
    <ligand>
        <name>NADP(+)</name>
        <dbReference type="ChEBI" id="CHEBI:58349"/>
    </ligand>
</feature>
<feature type="binding site" evidence="1">
    <location>
        <position position="45"/>
    </location>
    <ligand>
        <name>NADP(+)</name>
        <dbReference type="ChEBI" id="CHEBI:58349"/>
    </ligand>
</feature>
<feature type="binding site" evidence="1">
    <location>
        <position position="48"/>
    </location>
    <ligand>
        <name>NADP(+)</name>
        <dbReference type="ChEBI" id="CHEBI:58349"/>
    </ligand>
</feature>
<feature type="binding site" evidence="1">
    <location>
        <position position="50"/>
    </location>
    <ligand>
        <name>NADP(+)</name>
        <dbReference type="ChEBI" id="CHEBI:58349"/>
    </ligand>
</feature>
<feature type="binding site" evidence="1">
    <location>
        <begin position="80"/>
        <end position="83"/>
    </location>
    <ligand>
        <name>NADP(+)</name>
        <dbReference type="ChEBI" id="CHEBI:58349"/>
    </ligand>
</feature>
<feature type="binding site" evidence="1">
    <location>
        <position position="131"/>
    </location>
    <ligand>
        <name>NADP(+)</name>
        <dbReference type="ChEBI" id="CHEBI:58349"/>
    </ligand>
</feature>
<feature type="binding site" evidence="1">
    <location>
        <position position="188"/>
    </location>
    <ligand>
        <name>Mg(2+)</name>
        <dbReference type="ChEBI" id="CHEBI:18420"/>
        <label>1</label>
    </ligand>
</feature>
<feature type="binding site" evidence="1">
    <location>
        <position position="188"/>
    </location>
    <ligand>
        <name>Mg(2+)</name>
        <dbReference type="ChEBI" id="CHEBI:18420"/>
        <label>2</label>
    </ligand>
</feature>
<feature type="binding site" evidence="1">
    <location>
        <position position="192"/>
    </location>
    <ligand>
        <name>Mg(2+)</name>
        <dbReference type="ChEBI" id="CHEBI:18420"/>
        <label>1</label>
    </ligand>
</feature>
<feature type="binding site" evidence="1">
    <location>
        <position position="224"/>
    </location>
    <ligand>
        <name>Mg(2+)</name>
        <dbReference type="ChEBI" id="CHEBI:18420"/>
        <label>2</label>
    </ligand>
</feature>
<feature type="binding site" evidence="1">
    <location>
        <position position="228"/>
    </location>
    <ligand>
        <name>Mg(2+)</name>
        <dbReference type="ChEBI" id="CHEBI:18420"/>
        <label>2</label>
    </ligand>
</feature>
<feature type="binding site" evidence="1">
    <location>
        <position position="249"/>
    </location>
    <ligand>
        <name>substrate</name>
    </ligand>
</feature>
<evidence type="ECO:0000255" key="1">
    <source>
        <dbReference type="HAMAP-Rule" id="MF_00435"/>
    </source>
</evidence>
<evidence type="ECO:0000255" key="2">
    <source>
        <dbReference type="PROSITE-ProRule" id="PRU01197"/>
    </source>
</evidence>
<evidence type="ECO:0000255" key="3">
    <source>
        <dbReference type="PROSITE-ProRule" id="PRU01198"/>
    </source>
</evidence>
<protein>
    <recommendedName>
        <fullName evidence="1">Ketol-acid reductoisomerase (NADP(+))</fullName>
        <shortName evidence="1">KARI</shortName>
        <ecNumber evidence="1">1.1.1.86</ecNumber>
    </recommendedName>
    <alternativeName>
        <fullName evidence="1">Acetohydroxy-acid isomeroreductase</fullName>
        <shortName evidence="1">AHIR</shortName>
    </alternativeName>
    <alternativeName>
        <fullName evidence="1">Alpha-keto-beta-hydroxylacyl reductoisomerase</fullName>
    </alternativeName>
    <alternativeName>
        <fullName evidence="1">Ketol-acid reductoisomerase type 1</fullName>
    </alternativeName>
    <alternativeName>
        <fullName evidence="1">Ketol-acid reductoisomerase type I</fullName>
    </alternativeName>
</protein>
<reference key="1">
    <citation type="journal article" date="2003" name="Proc. Natl. Acad. Sci. U.S.A.">
        <title>The complete genome sequence of Mycobacterium bovis.</title>
        <authorList>
            <person name="Garnier T."/>
            <person name="Eiglmeier K."/>
            <person name="Camus J.-C."/>
            <person name="Medina N."/>
            <person name="Mansoor H."/>
            <person name="Pryor M."/>
            <person name="Duthoy S."/>
            <person name="Grondin S."/>
            <person name="Lacroix C."/>
            <person name="Monsempe C."/>
            <person name="Simon S."/>
            <person name="Harris B."/>
            <person name="Atkin R."/>
            <person name="Doggett J."/>
            <person name="Mayes R."/>
            <person name="Keating L."/>
            <person name="Wheeler P.R."/>
            <person name="Parkhill J."/>
            <person name="Barrell B.G."/>
            <person name="Cole S.T."/>
            <person name="Gordon S.V."/>
            <person name="Hewinson R.G."/>
        </authorList>
    </citation>
    <scope>NUCLEOTIDE SEQUENCE [LARGE SCALE GENOMIC DNA]</scope>
    <source>
        <strain>ATCC BAA-935 / AF2122/97</strain>
    </source>
</reference>
<reference key="2">
    <citation type="journal article" date="2017" name="Genome Announc.">
        <title>Updated reference genome sequence and annotation of Mycobacterium bovis AF2122/97.</title>
        <authorList>
            <person name="Malone K.M."/>
            <person name="Farrell D."/>
            <person name="Stuber T.P."/>
            <person name="Schubert O.T."/>
            <person name="Aebersold R."/>
            <person name="Robbe-Austerman S."/>
            <person name="Gordon S.V."/>
        </authorList>
    </citation>
    <scope>NUCLEOTIDE SEQUENCE [LARGE SCALE GENOMIC DNA]</scope>
    <scope>GENOME REANNOTATION</scope>
    <source>
        <strain>ATCC BAA-935 / AF2122/97</strain>
    </source>
</reference>
<proteinExistence type="inferred from homology"/>
<organism>
    <name type="scientific">Mycobacterium bovis (strain ATCC BAA-935 / AF2122/97)</name>
    <dbReference type="NCBI Taxonomy" id="233413"/>
    <lineage>
        <taxon>Bacteria</taxon>
        <taxon>Bacillati</taxon>
        <taxon>Actinomycetota</taxon>
        <taxon>Actinomycetes</taxon>
        <taxon>Mycobacteriales</taxon>
        <taxon>Mycobacteriaceae</taxon>
        <taxon>Mycobacterium</taxon>
        <taxon>Mycobacterium tuberculosis complex</taxon>
    </lineage>
</organism>
<sequence length="333" mass="36090">MFYDDDADLSIIQGRKVGVIGYGSQGHAHSLSLRDSGVQVRVGLKQGSRSRPKVEEQGLDVDTPAEVAKWADVVMVLAPDTAQAEIFAGDIEPNLKPGDALFFGHGLNVHFGLIKPPADVAVAMVAPKGPGHLVRRQFVDGKGVPCLVAVEQDPRGDGLALALSYAKAIGGTRAGVIKTTFKDETETDLFGEQTVLCGGTEELVKAGFEVMVEAGYPAELAYFEVLHELKLIVDLMYEGGLARMYYSVSDTAEFGGYLSGPRVIDAGTKERMRDILREIQDGSFVHKLVADVEGGNKQLEELRRQNAEHPIEVVGKKLRDLMSWVDRPITETA</sequence>
<dbReference type="EC" id="1.1.1.86" evidence="1"/>
<dbReference type="EMBL" id="LT708304">
    <property type="protein sequence ID" value="SIU01650.1"/>
    <property type="molecule type" value="Genomic_DNA"/>
</dbReference>
<dbReference type="RefSeq" id="NP_856671.1">
    <property type="nucleotide sequence ID" value="NC_002945.3"/>
</dbReference>
<dbReference type="RefSeq" id="WP_003899581.1">
    <property type="nucleotide sequence ID" value="NC_002945.4"/>
</dbReference>
<dbReference type="SMR" id="P65150"/>
<dbReference type="GeneID" id="45426991"/>
<dbReference type="KEGG" id="mbo:BQ2027_MB3026C"/>
<dbReference type="PATRIC" id="fig|233413.5.peg.3326"/>
<dbReference type="UniPathway" id="UPA00047">
    <property type="reaction ID" value="UER00056"/>
</dbReference>
<dbReference type="UniPathway" id="UPA00049">
    <property type="reaction ID" value="UER00060"/>
</dbReference>
<dbReference type="Proteomes" id="UP000001419">
    <property type="component" value="Chromosome"/>
</dbReference>
<dbReference type="GO" id="GO:0005829">
    <property type="term" value="C:cytosol"/>
    <property type="evidence" value="ECO:0007669"/>
    <property type="project" value="TreeGrafter"/>
</dbReference>
<dbReference type="GO" id="GO:0004455">
    <property type="term" value="F:ketol-acid reductoisomerase activity"/>
    <property type="evidence" value="ECO:0007669"/>
    <property type="project" value="UniProtKB-UniRule"/>
</dbReference>
<dbReference type="GO" id="GO:0000287">
    <property type="term" value="F:magnesium ion binding"/>
    <property type="evidence" value="ECO:0007669"/>
    <property type="project" value="UniProtKB-UniRule"/>
</dbReference>
<dbReference type="GO" id="GO:0050661">
    <property type="term" value="F:NADP binding"/>
    <property type="evidence" value="ECO:0007669"/>
    <property type="project" value="InterPro"/>
</dbReference>
<dbReference type="GO" id="GO:0009097">
    <property type="term" value="P:isoleucine biosynthetic process"/>
    <property type="evidence" value="ECO:0007669"/>
    <property type="project" value="UniProtKB-UniRule"/>
</dbReference>
<dbReference type="GO" id="GO:0009099">
    <property type="term" value="P:L-valine biosynthetic process"/>
    <property type="evidence" value="ECO:0007669"/>
    <property type="project" value="UniProtKB-UniRule"/>
</dbReference>
<dbReference type="FunFam" id="3.40.50.720:FF:000023">
    <property type="entry name" value="Ketol-acid reductoisomerase (NADP(+))"/>
    <property type="match status" value="1"/>
</dbReference>
<dbReference type="Gene3D" id="6.10.240.10">
    <property type="match status" value="1"/>
</dbReference>
<dbReference type="Gene3D" id="3.40.50.720">
    <property type="entry name" value="NAD(P)-binding Rossmann-like Domain"/>
    <property type="match status" value="1"/>
</dbReference>
<dbReference type="HAMAP" id="MF_00435">
    <property type="entry name" value="IlvC"/>
    <property type="match status" value="1"/>
</dbReference>
<dbReference type="InterPro" id="IPR008927">
    <property type="entry name" value="6-PGluconate_DH-like_C_sf"/>
</dbReference>
<dbReference type="InterPro" id="IPR013023">
    <property type="entry name" value="KARI"/>
</dbReference>
<dbReference type="InterPro" id="IPR000506">
    <property type="entry name" value="KARI_C"/>
</dbReference>
<dbReference type="InterPro" id="IPR013116">
    <property type="entry name" value="KARI_N"/>
</dbReference>
<dbReference type="InterPro" id="IPR014359">
    <property type="entry name" value="KARI_prok"/>
</dbReference>
<dbReference type="InterPro" id="IPR036291">
    <property type="entry name" value="NAD(P)-bd_dom_sf"/>
</dbReference>
<dbReference type="NCBIfam" id="TIGR00465">
    <property type="entry name" value="ilvC"/>
    <property type="match status" value="1"/>
</dbReference>
<dbReference type="NCBIfam" id="NF004017">
    <property type="entry name" value="PRK05479.1"/>
    <property type="match status" value="1"/>
</dbReference>
<dbReference type="PANTHER" id="PTHR21371">
    <property type="entry name" value="KETOL-ACID REDUCTOISOMERASE, MITOCHONDRIAL"/>
    <property type="match status" value="1"/>
</dbReference>
<dbReference type="PANTHER" id="PTHR21371:SF1">
    <property type="entry name" value="KETOL-ACID REDUCTOISOMERASE, MITOCHONDRIAL"/>
    <property type="match status" value="1"/>
</dbReference>
<dbReference type="Pfam" id="PF01450">
    <property type="entry name" value="KARI_C"/>
    <property type="match status" value="1"/>
</dbReference>
<dbReference type="Pfam" id="PF07991">
    <property type="entry name" value="KARI_N"/>
    <property type="match status" value="1"/>
</dbReference>
<dbReference type="PIRSF" id="PIRSF000116">
    <property type="entry name" value="IlvC_gammaproteo"/>
    <property type="match status" value="1"/>
</dbReference>
<dbReference type="SUPFAM" id="SSF48179">
    <property type="entry name" value="6-phosphogluconate dehydrogenase C-terminal domain-like"/>
    <property type="match status" value="1"/>
</dbReference>
<dbReference type="SUPFAM" id="SSF51735">
    <property type="entry name" value="NAD(P)-binding Rossmann-fold domains"/>
    <property type="match status" value="1"/>
</dbReference>
<dbReference type="PROSITE" id="PS51851">
    <property type="entry name" value="KARI_C"/>
    <property type="match status" value="1"/>
</dbReference>
<dbReference type="PROSITE" id="PS51850">
    <property type="entry name" value="KARI_N"/>
    <property type="match status" value="1"/>
</dbReference>
<name>ILVC_MYCBO</name>
<gene>
    <name evidence="1" type="primary">ilvC</name>
    <name type="ordered locus">BQ2027_MB3026C</name>
</gene>
<keyword id="KW-0028">Amino-acid biosynthesis</keyword>
<keyword id="KW-0100">Branched-chain amino acid biosynthesis</keyword>
<keyword id="KW-0460">Magnesium</keyword>
<keyword id="KW-0479">Metal-binding</keyword>
<keyword id="KW-0521">NADP</keyword>
<keyword id="KW-0560">Oxidoreductase</keyword>
<keyword id="KW-1185">Reference proteome</keyword>
<comment type="function">
    <text evidence="1">Involved in the biosynthesis of branched-chain amino acids (BCAA). Catalyzes an alkyl-migration followed by a ketol-acid reduction of (S)-2-acetolactate (S2AL) to yield (R)-2,3-dihydroxy-isovalerate. In the isomerase reaction, S2AL is rearranged via a Mg-dependent methyl migration to produce 3-hydroxy-3-methyl-2-ketobutyrate (HMKB). In the reductase reaction, this 2-ketoacid undergoes a metal-dependent reduction by NADPH to yield (R)-2,3-dihydroxy-isovalerate.</text>
</comment>
<comment type="catalytic activity">
    <reaction evidence="1">
        <text>(2R)-2,3-dihydroxy-3-methylbutanoate + NADP(+) = (2S)-2-acetolactate + NADPH + H(+)</text>
        <dbReference type="Rhea" id="RHEA:22068"/>
        <dbReference type="ChEBI" id="CHEBI:15378"/>
        <dbReference type="ChEBI" id="CHEBI:49072"/>
        <dbReference type="ChEBI" id="CHEBI:57783"/>
        <dbReference type="ChEBI" id="CHEBI:58349"/>
        <dbReference type="ChEBI" id="CHEBI:58476"/>
        <dbReference type="EC" id="1.1.1.86"/>
    </reaction>
</comment>
<comment type="catalytic activity">
    <reaction evidence="1">
        <text>(2R,3R)-2,3-dihydroxy-3-methylpentanoate + NADP(+) = (S)-2-ethyl-2-hydroxy-3-oxobutanoate + NADPH + H(+)</text>
        <dbReference type="Rhea" id="RHEA:13493"/>
        <dbReference type="ChEBI" id="CHEBI:15378"/>
        <dbReference type="ChEBI" id="CHEBI:49256"/>
        <dbReference type="ChEBI" id="CHEBI:49258"/>
        <dbReference type="ChEBI" id="CHEBI:57783"/>
        <dbReference type="ChEBI" id="CHEBI:58349"/>
        <dbReference type="EC" id="1.1.1.86"/>
    </reaction>
</comment>
<comment type="cofactor">
    <cofactor evidence="1">
        <name>Mg(2+)</name>
        <dbReference type="ChEBI" id="CHEBI:18420"/>
    </cofactor>
    <text evidence="1">Binds 2 magnesium ions per subunit.</text>
</comment>
<comment type="pathway">
    <text evidence="1">Amino-acid biosynthesis; L-isoleucine biosynthesis; L-isoleucine from 2-oxobutanoate: step 2/4.</text>
</comment>
<comment type="pathway">
    <text evidence="1">Amino-acid biosynthesis; L-valine biosynthesis; L-valine from pyruvate: step 2/4.</text>
</comment>
<comment type="similarity">
    <text evidence="1">Belongs to the ketol-acid reductoisomerase family.</text>
</comment>
<accession>P65150</accession>
<accession>A0A1R3Y2U9</accession>
<accession>O53248</accession>
<accession>X2BMA8</accession>